<proteinExistence type="evidence at transcript level"/>
<keyword id="KW-1185">Reference proteome</keyword>
<keyword id="KW-0964">Secreted</keyword>
<keyword id="KW-0713">Self-incompatibility</keyword>
<keyword id="KW-0732">Signal</keyword>
<comment type="subcellular location">
    <subcellularLocation>
        <location evidence="5">Secreted</location>
    </subcellularLocation>
</comment>
<comment type="tissue specificity">
    <text evidence="2">Mostly expressed in seedlings, stems, leaves and floral tissues, and, to a lower extent, in roots.</text>
</comment>
<comment type="similarity">
    <text evidence="4">Belongs to the plant self-incompatibility (S1) protein family.</text>
</comment>
<accession>B3H453</accession>
<gene>
    <name evidence="3" type="primary">SPH8</name>
    <name evidence="6" type="ordered locus">At5g38435</name>
    <name evidence="4" type="ORF">MXI10</name>
</gene>
<sequence length="132" mass="15306">MHSLSWFLLVIGLSVGLSSGKWNEKNSVIFTNSLGRNKVLKVNCISNDDNLGFHFLRHGQTYDFSFHDSLFKSEFYCDLWQGPNFKLHAAFTAYEGGGLIVHYGKKNFWDVRDDGIYFTHGQKMPKLEYTWK</sequence>
<evidence type="ECO:0000255" key="1"/>
<evidence type="ECO:0000269" key="2">
    <source>
    </source>
</evidence>
<evidence type="ECO:0000303" key="3">
    <source>
    </source>
</evidence>
<evidence type="ECO:0000305" key="4"/>
<evidence type="ECO:0000305" key="5">
    <source>
    </source>
</evidence>
<evidence type="ECO:0000312" key="6">
    <source>
        <dbReference type="Araport" id="AT5G38435"/>
    </source>
</evidence>
<name>SPH8_ARATH</name>
<dbReference type="EMBL" id="AB005248">
    <property type="status" value="NOT_ANNOTATED_CDS"/>
    <property type="molecule type" value="Genomic_DNA"/>
</dbReference>
<dbReference type="EMBL" id="CP002688">
    <property type="protein sequence ID" value="AED94316.1"/>
    <property type="molecule type" value="Genomic_DNA"/>
</dbReference>
<dbReference type="RefSeq" id="NP_001119332.1">
    <property type="nucleotide sequence ID" value="NM_001125860.2"/>
</dbReference>
<dbReference type="SMR" id="B3H453"/>
<dbReference type="PaxDb" id="3702-AT5G38435.1"/>
<dbReference type="ProteomicsDB" id="232484"/>
<dbReference type="EnsemblPlants" id="AT5G38435.1">
    <property type="protein sequence ID" value="AT5G38435.1"/>
    <property type="gene ID" value="AT5G38435"/>
</dbReference>
<dbReference type="GeneID" id="3771363"/>
<dbReference type="Gramene" id="AT5G38435.1">
    <property type="protein sequence ID" value="AT5G38435.1"/>
    <property type="gene ID" value="AT5G38435"/>
</dbReference>
<dbReference type="KEGG" id="ath:AT5G38435"/>
<dbReference type="Araport" id="AT5G38435"/>
<dbReference type="TAIR" id="AT5G38435">
    <property type="gene designation" value="SPH8"/>
</dbReference>
<dbReference type="HOGENOM" id="CLU_125658_3_0_1"/>
<dbReference type="InParanoid" id="B3H453"/>
<dbReference type="OMA" id="SEFYCDL"/>
<dbReference type="OrthoDB" id="1045332at2759"/>
<dbReference type="PhylomeDB" id="B3H453"/>
<dbReference type="PRO" id="PR:B3H453"/>
<dbReference type="Proteomes" id="UP000006548">
    <property type="component" value="Chromosome 5"/>
</dbReference>
<dbReference type="ExpressionAtlas" id="B3H453">
    <property type="expression patterns" value="baseline and differential"/>
</dbReference>
<dbReference type="GO" id="GO:0005576">
    <property type="term" value="C:extracellular region"/>
    <property type="evidence" value="ECO:0007669"/>
    <property type="project" value="UniProtKB-SubCell"/>
</dbReference>
<dbReference type="GO" id="GO:0009875">
    <property type="term" value="P:pollen-pistil interaction"/>
    <property type="evidence" value="ECO:0000250"/>
    <property type="project" value="TAIR"/>
</dbReference>
<dbReference type="GO" id="GO:0060320">
    <property type="term" value="P:rejection of self pollen"/>
    <property type="evidence" value="ECO:0007669"/>
    <property type="project" value="UniProtKB-KW"/>
</dbReference>
<dbReference type="InterPro" id="IPR010264">
    <property type="entry name" value="Self-incomp_S1"/>
</dbReference>
<dbReference type="PANTHER" id="PTHR31232">
    <property type="match status" value="1"/>
</dbReference>
<dbReference type="PANTHER" id="PTHR31232:SF27">
    <property type="entry name" value="S-PROTEIN HOMOLOG 8"/>
    <property type="match status" value="1"/>
</dbReference>
<dbReference type="Pfam" id="PF05938">
    <property type="entry name" value="Self-incomp_S1"/>
    <property type="match status" value="1"/>
</dbReference>
<organism>
    <name type="scientific">Arabidopsis thaliana</name>
    <name type="common">Mouse-ear cress</name>
    <dbReference type="NCBI Taxonomy" id="3702"/>
    <lineage>
        <taxon>Eukaryota</taxon>
        <taxon>Viridiplantae</taxon>
        <taxon>Streptophyta</taxon>
        <taxon>Embryophyta</taxon>
        <taxon>Tracheophyta</taxon>
        <taxon>Spermatophyta</taxon>
        <taxon>Magnoliopsida</taxon>
        <taxon>eudicotyledons</taxon>
        <taxon>Gunneridae</taxon>
        <taxon>Pentapetalae</taxon>
        <taxon>rosids</taxon>
        <taxon>malvids</taxon>
        <taxon>Brassicales</taxon>
        <taxon>Brassicaceae</taxon>
        <taxon>Camelineae</taxon>
        <taxon>Arabidopsis</taxon>
    </lineage>
</organism>
<reference key="1">
    <citation type="journal article" date="1997" name="DNA Res.">
        <title>Structural analysis of Arabidopsis thaliana chromosome 5. I. Sequence features of the 1.6 Mb regions covered by twenty physically assigned P1 clones.</title>
        <authorList>
            <person name="Sato S."/>
            <person name="Kotani H."/>
            <person name="Nakamura Y."/>
            <person name="Kaneko T."/>
            <person name="Asamizu E."/>
            <person name="Fukami M."/>
            <person name="Miyajima N."/>
            <person name="Tabata S."/>
        </authorList>
    </citation>
    <scope>NUCLEOTIDE SEQUENCE [LARGE SCALE GENOMIC DNA]</scope>
    <source>
        <strain>cv. Columbia</strain>
    </source>
</reference>
<reference key="2">
    <citation type="journal article" date="2017" name="Plant J.">
        <title>Araport11: a complete reannotation of the Arabidopsis thaliana reference genome.</title>
        <authorList>
            <person name="Cheng C.Y."/>
            <person name="Krishnakumar V."/>
            <person name="Chan A.P."/>
            <person name="Thibaud-Nissen F."/>
            <person name="Schobel S."/>
            <person name="Town C.D."/>
        </authorList>
    </citation>
    <scope>GENOME REANNOTATION</scope>
    <source>
        <strain>cv. Columbia</strain>
    </source>
</reference>
<reference key="3">
    <citation type="journal article" date="1999" name="Plant Mol. Biol.">
        <title>Analysis of Arabidopsis genome sequence reveals a large new gene family in plants.</title>
        <authorList>
            <person name="Ride J.P."/>
            <person name="Davies E.M."/>
            <person name="Franklin F.C.H."/>
            <person name="Marshall D.F."/>
        </authorList>
    </citation>
    <scope>TISSUE SPECIFICITY</scope>
    <scope>GENE FAMILY</scope>
    <scope>NOMENCLATURE</scope>
    <source>
        <strain>cv. Columbia</strain>
    </source>
</reference>
<feature type="signal peptide" evidence="1">
    <location>
        <begin position="1"/>
        <end position="20"/>
    </location>
</feature>
<feature type="chain" id="PRO_5009329880" description="S-protein homolog 8">
    <location>
        <begin position="21"/>
        <end position="132"/>
    </location>
</feature>
<protein>
    <recommendedName>
        <fullName evidence="3">S-protein homolog 8</fullName>
    </recommendedName>
</protein>